<comment type="function">
    <text evidence="1">Forms part of the ribosomal stalk which helps the ribosome interact with GTP-bound translation factors. Is thus essential for accurate translation.</text>
</comment>
<comment type="subunit">
    <text evidence="1">Homodimer. Part of the ribosomal stalk of the 50S ribosomal subunit. Forms a multimeric L10(L12)X complex, where L10 forms an elongated spine to which 2 to 4 L12 dimers bind in a sequential fashion. Binds GTP-bound translation factors.</text>
</comment>
<comment type="similarity">
    <text evidence="1">Belongs to the bacterial ribosomal protein bL12 family.</text>
</comment>
<dbReference type="EMBL" id="BA000030">
    <property type="protein sequence ID" value="BAC72625.1"/>
    <property type="molecule type" value="Genomic_DNA"/>
</dbReference>
<dbReference type="RefSeq" id="WP_010986332.1">
    <property type="nucleotide sequence ID" value="NZ_JZJK01000077.1"/>
</dbReference>
<dbReference type="SMR" id="Q82DQ6"/>
<dbReference type="GeneID" id="41541997"/>
<dbReference type="KEGG" id="sma:SAVERM_4913"/>
<dbReference type="eggNOG" id="COG0222">
    <property type="taxonomic scope" value="Bacteria"/>
</dbReference>
<dbReference type="HOGENOM" id="CLU_086499_3_0_11"/>
<dbReference type="OrthoDB" id="9811748at2"/>
<dbReference type="Proteomes" id="UP000000428">
    <property type="component" value="Chromosome"/>
</dbReference>
<dbReference type="GO" id="GO:0022625">
    <property type="term" value="C:cytosolic large ribosomal subunit"/>
    <property type="evidence" value="ECO:0007669"/>
    <property type="project" value="TreeGrafter"/>
</dbReference>
<dbReference type="GO" id="GO:0003729">
    <property type="term" value="F:mRNA binding"/>
    <property type="evidence" value="ECO:0007669"/>
    <property type="project" value="TreeGrafter"/>
</dbReference>
<dbReference type="GO" id="GO:0003735">
    <property type="term" value="F:structural constituent of ribosome"/>
    <property type="evidence" value="ECO:0007669"/>
    <property type="project" value="InterPro"/>
</dbReference>
<dbReference type="GO" id="GO:0006412">
    <property type="term" value="P:translation"/>
    <property type="evidence" value="ECO:0007669"/>
    <property type="project" value="UniProtKB-UniRule"/>
</dbReference>
<dbReference type="CDD" id="cd00387">
    <property type="entry name" value="Ribosomal_L7_L12"/>
    <property type="match status" value="1"/>
</dbReference>
<dbReference type="FunFam" id="3.30.1390.10:FF:000001">
    <property type="entry name" value="50S ribosomal protein L7/L12"/>
    <property type="match status" value="1"/>
</dbReference>
<dbReference type="Gene3D" id="3.30.1390.10">
    <property type="match status" value="1"/>
</dbReference>
<dbReference type="Gene3D" id="1.20.5.710">
    <property type="entry name" value="Single helix bin"/>
    <property type="match status" value="1"/>
</dbReference>
<dbReference type="HAMAP" id="MF_00368">
    <property type="entry name" value="Ribosomal_bL12"/>
    <property type="match status" value="1"/>
</dbReference>
<dbReference type="InterPro" id="IPR000206">
    <property type="entry name" value="Ribosomal_bL12"/>
</dbReference>
<dbReference type="InterPro" id="IPR013823">
    <property type="entry name" value="Ribosomal_bL12_C"/>
</dbReference>
<dbReference type="InterPro" id="IPR014719">
    <property type="entry name" value="Ribosomal_bL12_C/ClpS-like"/>
</dbReference>
<dbReference type="InterPro" id="IPR008932">
    <property type="entry name" value="Ribosomal_bL12_oligo"/>
</dbReference>
<dbReference type="InterPro" id="IPR036235">
    <property type="entry name" value="Ribosomal_bL12_oligo_N_sf"/>
</dbReference>
<dbReference type="NCBIfam" id="TIGR00855">
    <property type="entry name" value="L12"/>
    <property type="match status" value="1"/>
</dbReference>
<dbReference type="PANTHER" id="PTHR45987">
    <property type="entry name" value="39S RIBOSOMAL PROTEIN L12"/>
    <property type="match status" value="1"/>
</dbReference>
<dbReference type="PANTHER" id="PTHR45987:SF4">
    <property type="entry name" value="LARGE RIBOSOMAL SUBUNIT PROTEIN BL12M"/>
    <property type="match status" value="1"/>
</dbReference>
<dbReference type="Pfam" id="PF00542">
    <property type="entry name" value="Ribosomal_L12"/>
    <property type="match status" value="1"/>
</dbReference>
<dbReference type="Pfam" id="PF16320">
    <property type="entry name" value="Ribosomal_L12_N"/>
    <property type="match status" value="1"/>
</dbReference>
<dbReference type="SUPFAM" id="SSF54736">
    <property type="entry name" value="ClpS-like"/>
    <property type="match status" value="1"/>
</dbReference>
<dbReference type="SUPFAM" id="SSF48300">
    <property type="entry name" value="Ribosomal protein L7/12, oligomerisation (N-terminal) domain"/>
    <property type="match status" value="1"/>
</dbReference>
<reference key="1">
    <citation type="journal article" date="2001" name="Proc. Natl. Acad. Sci. U.S.A.">
        <title>Genome sequence of an industrial microorganism Streptomyces avermitilis: deducing the ability of producing secondary metabolites.</title>
        <authorList>
            <person name="Omura S."/>
            <person name="Ikeda H."/>
            <person name="Ishikawa J."/>
            <person name="Hanamoto A."/>
            <person name="Takahashi C."/>
            <person name="Shinose M."/>
            <person name="Takahashi Y."/>
            <person name="Horikawa H."/>
            <person name="Nakazawa H."/>
            <person name="Osonoe T."/>
            <person name="Kikuchi H."/>
            <person name="Shiba T."/>
            <person name="Sakaki Y."/>
            <person name="Hattori M."/>
        </authorList>
    </citation>
    <scope>NUCLEOTIDE SEQUENCE [LARGE SCALE GENOMIC DNA]</scope>
    <source>
        <strain>ATCC 31267 / DSM 46492 / JCM 5070 / NBRC 14893 / NCIMB 12804 / NRRL 8165 / MA-4680</strain>
    </source>
</reference>
<reference key="2">
    <citation type="journal article" date="2003" name="Nat. Biotechnol.">
        <title>Complete genome sequence and comparative analysis of the industrial microorganism Streptomyces avermitilis.</title>
        <authorList>
            <person name="Ikeda H."/>
            <person name="Ishikawa J."/>
            <person name="Hanamoto A."/>
            <person name="Shinose M."/>
            <person name="Kikuchi H."/>
            <person name="Shiba T."/>
            <person name="Sakaki Y."/>
            <person name="Hattori M."/>
            <person name="Omura S."/>
        </authorList>
    </citation>
    <scope>NUCLEOTIDE SEQUENCE [LARGE SCALE GENOMIC DNA]</scope>
    <source>
        <strain>ATCC 31267 / DSM 46492 / JCM 5070 / NBRC 14893 / NCIMB 12804 / NRRL 8165 / MA-4680</strain>
    </source>
</reference>
<protein>
    <recommendedName>
        <fullName evidence="1">Large ribosomal subunit protein bL12</fullName>
    </recommendedName>
    <alternativeName>
        <fullName evidence="2">50S ribosomal protein L7/L12</fullName>
    </alternativeName>
</protein>
<sequence length="127" mass="13281">MATKLSQEELLEQFESLTLIELAEFVKAFEEKFDVTAAAAVAAAPAGPVAAAEAAEEQDEFDVILTGAGDKKIQVIKVVRELTSLGLKEAKDLVDGAPKPVLEKVAKEAAEKAAESLKGAGASVEVK</sequence>
<name>RL7_STRAW</name>
<feature type="chain" id="PRO_0000243506" description="Large ribosomal subunit protein bL12">
    <location>
        <begin position="1"/>
        <end position="127"/>
    </location>
</feature>
<organism>
    <name type="scientific">Streptomyces avermitilis (strain ATCC 31267 / DSM 46492 / JCM 5070 / NBRC 14893 / NCIMB 12804 / NRRL 8165 / MA-4680)</name>
    <dbReference type="NCBI Taxonomy" id="227882"/>
    <lineage>
        <taxon>Bacteria</taxon>
        <taxon>Bacillati</taxon>
        <taxon>Actinomycetota</taxon>
        <taxon>Actinomycetes</taxon>
        <taxon>Kitasatosporales</taxon>
        <taxon>Streptomycetaceae</taxon>
        <taxon>Streptomyces</taxon>
    </lineage>
</organism>
<evidence type="ECO:0000255" key="1">
    <source>
        <dbReference type="HAMAP-Rule" id="MF_00368"/>
    </source>
</evidence>
<evidence type="ECO:0000305" key="2"/>
<keyword id="KW-1185">Reference proteome</keyword>
<keyword id="KW-0687">Ribonucleoprotein</keyword>
<keyword id="KW-0689">Ribosomal protein</keyword>
<gene>
    <name evidence="1" type="primary">rplL</name>
    <name type="ordered locus">SAV_4913</name>
</gene>
<proteinExistence type="inferred from homology"/>
<accession>Q82DQ6</accession>